<accession>Q9HWT6</accession>
<proteinExistence type="evidence at protein level"/>
<reference key="1">
    <citation type="journal article" date="2000" name="Nature">
        <title>Complete genome sequence of Pseudomonas aeruginosa PAO1, an opportunistic pathogen.</title>
        <authorList>
            <person name="Stover C.K."/>
            <person name="Pham X.-Q.T."/>
            <person name="Erwin A.L."/>
            <person name="Mizoguchi S.D."/>
            <person name="Warrener P."/>
            <person name="Hickey M.J."/>
            <person name="Brinkman F.S.L."/>
            <person name="Hufnagle W.O."/>
            <person name="Kowalik D.J."/>
            <person name="Lagrou M."/>
            <person name="Garber R.L."/>
            <person name="Goltry L."/>
            <person name="Tolentino E."/>
            <person name="Westbrock-Wadman S."/>
            <person name="Yuan Y."/>
            <person name="Brody L.L."/>
            <person name="Coulter S.N."/>
            <person name="Folger K.R."/>
            <person name="Kas A."/>
            <person name="Larbig K."/>
            <person name="Lim R.M."/>
            <person name="Smith K.A."/>
            <person name="Spencer D.H."/>
            <person name="Wong G.K.-S."/>
            <person name="Wu Z."/>
            <person name="Paulsen I.T."/>
            <person name="Reizer J."/>
            <person name="Saier M.H. Jr."/>
            <person name="Hancock R.E.W."/>
            <person name="Lory S."/>
            <person name="Olson M.V."/>
        </authorList>
    </citation>
    <scope>NUCLEOTIDE SEQUENCE [LARGE SCALE GENOMIC DNA]</scope>
    <source>
        <strain>ATCC 15692 / DSM 22644 / CIP 104116 / JCM 14847 / LMG 12228 / 1C / PRS 101 / PAO1</strain>
    </source>
</reference>
<reference key="2">
    <citation type="journal article" date="2010" name="Biochemistry">
        <title>Studies on the mechanism of p-hydroxyphenylacetate 3-hydroxylase from Pseudomonas aeruginosa: a system composed of a small flavin reductase and a large flavin-dependent oxygenase.</title>
        <authorList>
            <person name="Chakraborty S."/>
            <person name="Ortiz-Maldonado M."/>
            <person name="Entsch B."/>
            <person name="Ballou D.P."/>
        </authorList>
    </citation>
    <scope>FUNCTION</scope>
    <scope>CATALYTIC ACTIVITY</scope>
    <scope>SUBUNIT</scope>
    <scope>SUBSTRATE SPECIFICITY</scope>
    <scope>ACTIVITY REGULATION</scope>
</reference>
<reference key="3">
    <citation type="journal article" date="2014" name="Appl. Microbiol. Biotechnol.">
        <title>Catalytic activity of the two-component flavin-dependent monooxygenase from Pseudomonas aeruginosa toward cinnamic acid derivatives.</title>
        <authorList>
            <person name="Furuya T."/>
            <person name="Kino K."/>
        </authorList>
    </citation>
    <scope>SUBUNIT</scope>
    <scope>BIOTECHNOLOGY</scope>
    <source>
        <strain>ATCC 15692 / DSM 22644 / CIP 104116 / JCM 14847 / LMG 12228 / 1C / PRS 101 / PAO1</strain>
    </source>
</reference>
<name>HPAC_PSEAE</name>
<gene>
    <name evidence="3 4 8" type="primary">hpaC</name>
    <name evidence="8" type="ordered locus">PA4092</name>
</gene>
<protein>
    <recommendedName>
        <fullName evidence="6">4-hydroxyphenylacetate 3-monooxygenase reductase component</fullName>
        <shortName evidence="6">HPA 3-monooxygenase reductase component</shortName>
        <ecNumber evidence="1">1.5.1.37</ecNumber>
    </recommendedName>
    <alternativeName>
        <fullName evidence="5">FAD reductase (NADH)</fullName>
    </alternativeName>
    <alternativeName>
        <fullName evidence="6">p-hydroxyphenylacetate 3-hydroxylase small component</fullName>
        <shortName evidence="6">HPAH small component</shortName>
    </alternativeName>
</protein>
<evidence type="ECO:0000269" key="1">
    <source>
    </source>
</evidence>
<evidence type="ECO:0000269" key="2">
    <source>
    </source>
</evidence>
<evidence type="ECO:0000303" key="3">
    <source>
    </source>
</evidence>
<evidence type="ECO:0000303" key="4">
    <source>
    </source>
</evidence>
<evidence type="ECO:0000305" key="5"/>
<evidence type="ECO:0000305" key="6">
    <source>
    </source>
</evidence>
<evidence type="ECO:0000305" key="7">
    <source>
    </source>
</evidence>
<evidence type="ECO:0000312" key="8">
    <source>
        <dbReference type="EMBL" id="AAG07479.1"/>
    </source>
</evidence>
<organism>
    <name type="scientific">Pseudomonas aeruginosa (strain ATCC 15692 / DSM 22644 / CIP 104116 / JCM 14847 / LMG 12228 / 1C / PRS 101 / PAO1)</name>
    <dbReference type="NCBI Taxonomy" id="208964"/>
    <lineage>
        <taxon>Bacteria</taxon>
        <taxon>Pseudomonadati</taxon>
        <taxon>Pseudomonadota</taxon>
        <taxon>Gammaproteobacteria</taxon>
        <taxon>Pseudomonadales</taxon>
        <taxon>Pseudomonadaceae</taxon>
        <taxon>Pseudomonas</taxon>
    </lineage>
</organism>
<keyword id="KW-0058">Aromatic hydrocarbons catabolism</keyword>
<keyword id="KW-0274">FAD</keyword>
<keyword id="KW-0285">Flavoprotein</keyword>
<keyword id="KW-0520">NAD</keyword>
<keyword id="KW-0560">Oxidoreductase</keyword>
<keyword id="KW-1185">Reference proteome</keyword>
<comment type="function">
    <text evidence="1">Reductase component of the 4-hydroxyphenylacetate (HPA) 3-hydroxylase. Catalyzes the reduction of FAD by NADH. The reduced flavin is then transferred to the oxygenase component HpaB. Is also able to reduce FMN and riboflavin, but preferentially binds FAD. Has no activity with NADPH as the reductant.</text>
</comment>
<comment type="catalytic activity">
    <reaction evidence="1">
        <text>FADH2 + NAD(+) = FAD + NADH + 2 H(+)</text>
        <dbReference type="Rhea" id="RHEA:30147"/>
        <dbReference type="ChEBI" id="CHEBI:15378"/>
        <dbReference type="ChEBI" id="CHEBI:57540"/>
        <dbReference type="ChEBI" id="CHEBI:57692"/>
        <dbReference type="ChEBI" id="CHEBI:57945"/>
        <dbReference type="ChEBI" id="CHEBI:58307"/>
        <dbReference type="EC" id="1.5.1.37"/>
    </reaction>
</comment>
<comment type="activity regulation">
    <text evidence="1">The rate of FAD reduction is independent of the presence of HPA, demonstrating that, in contrast to HPAH from A.baumannii, the activity of the HPAH reductase is not allosterically regulated by the substrate.</text>
</comment>
<comment type="pathway">
    <text evidence="5">Aromatic compound metabolism; 4-hydroxyphenylacetate degradation; pyruvate and succinate semialdehyde from 4-hydroxyphenylacetate: step 1/7.</text>
</comment>
<comment type="subunit">
    <text evidence="1 7">Monomer. HPA 3-hydroxylase consists of a reductase component HpaC and an oxygenase component HpaB. Some form of interactions between the reductase and the oxygenase facilitate the transfer of FADH(-) to the oxygenase in P.aeruginosa, although interactions are not required in other species.</text>
</comment>
<comment type="biotechnology">
    <text evidence="2">HpaBC can provide a biocatalytic synthetic approach to the production of hydroxycinnamic acids that is an alternative to, or complementary to, conventional methods such as chemical synthesis and extraction from plant sources.</text>
</comment>
<comment type="similarity">
    <text evidence="5">Belongs to the non-flavoprotein flavin reductase family. HpaC subfamily.</text>
</comment>
<sequence length="170" mass="18616">MSQLEPRQQAFRNAMAHLSAAVNVITSNGPAGRCGITATAVCSVTDSPPTLMLCINRNSEMNTVFKANGRLCVNVLSGEHEEVARHFAGMTEVPMERRFALHDWREGLAGLPVLHGALANLQGRIAEVQEIGTHSVLLLELEDIQVLEQGDGLVYFSRSFHRLQCPRRAA</sequence>
<dbReference type="EC" id="1.5.1.37" evidence="1"/>
<dbReference type="EMBL" id="AE004091">
    <property type="protein sequence ID" value="AAG07479.1"/>
    <property type="molecule type" value="Genomic_DNA"/>
</dbReference>
<dbReference type="PIR" id="A83135">
    <property type="entry name" value="A83135"/>
</dbReference>
<dbReference type="RefSeq" id="NP_252781.1">
    <property type="nucleotide sequence ID" value="NC_002516.2"/>
</dbReference>
<dbReference type="RefSeq" id="WP_003104531.1">
    <property type="nucleotide sequence ID" value="NZ_QZGE01000013.1"/>
</dbReference>
<dbReference type="SMR" id="Q9HWT6"/>
<dbReference type="FunCoup" id="Q9HWT6">
    <property type="interactions" value="45"/>
</dbReference>
<dbReference type="STRING" id="208964.PA4092"/>
<dbReference type="PaxDb" id="208964-PA4092"/>
<dbReference type="DNASU" id="878735"/>
<dbReference type="GeneID" id="878735"/>
<dbReference type="KEGG" id="pae:PA4092"/>
<dbReference type="PATRIC" id="fig|208964.12.peg.4285"/>
<dbReference type="PseudoCAP" id="PA4092"/>
<dbReference type="HOGENOM" id="CLU_059021_2_2_6"/>
<dbReference type="InParanoid" id="Q9HWT6"/>
<dbReference type="OrthoDB" id="6401628at2"/>
<dbReference type="PhylomeDB" id="Q9HWT6"/>
<dbReference type="BioCyc" id="PAER208964:G1FZ6-4164-MONOMER"/>
<dbReference type="BRENDA" id="1.14.14.9">
    <property type="organism ID" value="5087"/>
</dbReference>
<dbReference type="UniPathway" id="UPA00208">
    <property type="reaction ID" value="UER00416"/>
</dbReference>
<dbReference type="Proteomes" id="UP000002438">
    <property type="component" value="Chromosome"/>
</dbReference>
<dbReference type="GO" id="GO:0050660">
    <property type="term" value="F:flavin adenine dinucleotide binding"/>
    <property type="evidence" value="ECO:0000314"/>
    <property type="project" value="UniProtKB"/>
</dbReference>
<dbReference type="GO" id="GO:0036382">
    <property type="term" value="F:flavin reductase (NADH) activity"/>
    <property type="evidence" value="ECO:0000314"/>
    <property type="project" value="UniProtKB"/>
</dbReference>
<dbReference type="GO" id="GO:0010181">
    <property type="term" value="F:FMN binding"/>
    <property type="evidence" value="ECO:0007669"/>
    <property type="project" value="InterPro"/>
</dbReference>
<dbReference type="GO" id="GO:0051287">
    <property type="term" value="F:NAD binding"/>
    <property type="evidence" value="ECO:0000314"/>
    <property type="project" value="UniProtKB"/>
</dbReference>
<dbReference type="GO" id="GO:0016651">
    <property type="term" value="F:oxidoreductase activity, acting on NAD(P)H"/>
    <property type="evidence" value="ECO:0007669"/>
    <property type="project" value="InterPro"/>
</dbReference>
<dbReference type="GO" id="GO:0042602">
    <property type="term" value="F:riboflavin reductase (NADPH) activity"/>
    <property type="evidence" value="ECO:0000318"/>
    <property type="project" value="GO_Central"/>
</dbReference>
<dbReference type="GO" id="GO:0042537">
    <property type="term" value="P:benzene-containing compound metabolic process"/>
    <property type="evidence" value="ECO:0007669"/>
    <property type="project" value="InterPro"/>
</dbReference>
<dbReference type="GO" id="GO:0006208">
    <property type="term" value="P:pyrimidine nucleobase catabolic process"/>
    <property type="evidence" value="ECO:0000318"/>
    <property type="project" value="GO_Central"/>
</dbReference>
<dbReference type="FunFam" id="2.30.110.10:FF:000002">
    <property type="entry name" value="FMN reductase (NADH) RutF"/>
    <property type="match status" value="1"/>
</dbReference>
<dbReference type="Gene3D" id="2.30.110.10">
    <property type="entry name" value="Electron Transport, Fmn-binding Protein, Chain A"/>
    <property type="match status" value="1"/>
</dbReference>
<dbReference type="InterPro" id="IPR002563">
    <property type="entry name" value="Flavin_Rdtase-like_dom"/>
</dbReference>
<dbReference type="InterPro" id="IPR011982">
    <property type="entry name" value="HPA_mOase_red"/>
</dbReference>
<dbReference type="InterPro" id="IPR050268">
    <property type="entry name" value="NADH-dep_flavin_reductase"/>
</dbReference>
<dbReference type="InterPro" id="IPR012349">
    <property type="entry name" value="Split_barrel_FMN-bd"/>
</dbReference>
<dbReference type="NCBIfam" id="TIGR02296">
    <property type="entry name" value="HpaC"/>
    <property type="match status" value="1"/>
</dbReference>
<dbReference type="PANTHER" id="PTHR30466">
    <property type="entry name" value="FLAVIN REDUCTASE"/>
    <property type="match status" value="1"/>
</dbReference>
<dbReference type="PANTHER" id="PTHR30466:SF1">
    <property type="entry name" value="FMN REDUCTASE (NADH) RUTF"/>
    <property type="match status" value="1"/>
</dbReference>
<dbReference type="Pfam" id="PF01613">
    <property type="entry name" value="Flavin_Reduct"/>
    <property type="match status" value="1"/>
</dbReference>
<dbReference type="SMART" id="SM00903">
    <property type="entry name" value="Flavin_Reduct"/>
    <property type="match status" value="1"/>
</dbReference>
<dbReference type="SUPFAM" id="SSF50475">
    <property type="entry name" value="FMN-binding split barrel"/>
    <property type="match status" value="1"/>
</dbReference>
<feature type="chain" id="PRO_0000437539" description="4-hydroxyphenylacetate 3-monooxygenase reductase component">
    <location>
        <begin position="1"/>
        <end position="170"/>
    </location>
</feature>